<dbReference type="EMBL" id="U22383">
    <property type="status" value="NOT_ANNOTATED_CDS"/>
    <property type="molecule type" value="Genomic_DNA"/>
</dbReference>
<dbReference type="EMBL" id="AF480010">
    <property type="protein sequence ID" value="AAL79323.1"/>
    <property type="molecule type" value="Genomic_DNA"/>
</dbReference>
<dbReference type="STRING" id="4932.YLR466C-A"/>
<dbReference type="PaxDb" id="4932-YLR466C-A"/>
<dbReference type="EnsemblFungi" id="YLR466C-A_mRNA">
    <property type="protein sequence ID" value="YLR466C-A"/>
    <property type="gene ID" value="YLR466C-A"/>
</dbReference>
<dbReference type="EnsemblFungi" id="YLR467C-A_mRNA">
    <property type="protein sequence ID" value="YLR467C-A"/>
    <property type="gene ID" value="YLR467C-A"/>
</dbReference>
<dbReference type="EnsemblFungi" id="YOR396C-A_mRNA">
    <property type="protein sequence ID" value="YOR396C-A"/>
    <property type="gene ID" value="YOR396C-A"/>
</dbReference>
<dbReference type="AGR" id="SGD:S000028685"/>
<dbReference type="SGD" id="S000028685">
    <property type="gene designation" value="YLR466C-A"/>
</dbReference>
<dbReference type="HOGENOM" id="CLU_139933_0_0_1"/>
<dbReference type="GO" id="GO:0016020">
    <property type="term" value="C:membrane"/>
    <property type="evidence" value="ECO:0007669"/>
    <property type="project" value="UniProtKB-SubCell"/>
</dbReference>
<name>YL66C_YEAST</name>
<feature type="chain" id="PRO_0000406012" description="Putative UPF0479 protein YLR466C-A">
    <location>
        <begin position="1"/>
        <end position="160"/>
    </location>
</feature>
<feature type="transmembrane region" description="Helical" evidence="1">
    <location>
        <begin position="39"/>
        <end position="59"/>
    </location>
</feature>
<feature type="transmembrane region" description="Helical" evidence="1">
    <location>
        <begin position="136"/>
        <end position="156"/>
    </location>
</feature>
<reference key="1">
    <citation type="journal article" date="1997" name="Nature">
        <title>The nucleotide sequence of Saccharomyces cerevisiae chromosome XII.</title>
        <authorList>
            <person name="Johnston M."/>
            <person name="Hillier L.W."/>
            <person name="Riles L."/>
            <person name="Albermann K."/>
            <person name="Andre B."/>
            <person name="Ansorge W."/>
            <person name="Benes V."/>
            <person name="Brueckner M."/>
            <person name="Delius H."/>
            <person name="Dubois E."/>
            <person name="Duesterhoeft A."/>
            <person name="Entian K.-D."/>
            <person name="Floeth M."/>
            <person name="Goffeau A."/>
            <person name="Hebling U."/>
            <person name="Heumann K."/>
            <person name="Heuss-Neitzel D."/>
            <person name="Hilbert H."/>
            <person name="Hilger F."/>
            <person name="Kleine K."/>
            <person name="Koetter P."/>
            <person name="Louis E.J."/>
            <person name="Messenguy F."/>
            <person name="Mewes H.-W."/>
            <person name="Miosga T."/>
            <person name="Moestl D."/>
            <person name="Mueller-Auer S."/>
            <person name="Nentwich U."/>
            <person name="Obermaier B."/>
            <person name="Piravandi E."/>
            <person name="Pohl T.M."/>
            <person name="Portetelle D."/>
            <person name="Purnelle B."/>
            <person name="Rechmann S."/>
            <person name="Rieger M."/>
            <person name="Rinke M."/>
            <person name="Rose M."/>
            <person name="Scharfe M."/>
            <person name="Scherens B."/>
            <person name="Scholler P."/>
            <person name="Schwager C."/>
            <person name="Schwarz S."/>
            <person name="Underwood A.P."/>
            <person name="Urrestarazu L.A."/>
            <person name="Vandenbol M."/>
            <person name="Verhasselt P."/>
            <person name="Vierendeels F."/>
            <person name="Voet M."/>
            <person name="Volckaert G."/>
            <person name="Voss H."/>
            <person name="Wambutt R."/>
            <person name="Wedler E."/>
            <person name="Wedler H."/>
            <person name="Zimmermann F.K."/>
            <person name="Zollner A."/>
            <person name="Hani J."/>
            <person name="Hoheisel J.D."/>
        </authorList>
    </citation>
    <scope>NUCLEOTIDE SEQUENCE [LARGE SCALE GENOMIC DNA]</scope>
    <source>
        <strain>ATCC 204508 / S288c</strain>
    </source>
</reference>
<reference key="2">
    <citation type="journal article" date="2014" name="G3 (Bethesda)">
        <title>The reference genome sequence of Saccharomyces cerevisiae: Then and now.</title>
        <authorList>
            <person name="Engel S.R."/>
            <person name="Dietrich F.S."/>
            <person name="Fisk D.G."/>
            <person name="Binkley G."/>
            <person name="Balakrishnan R."/>
            <person name="Costanzo M.C."/>
            <person name="Dwight S.S."/>
            <person name="Hitz B.C."/>
            <person name="Karra K."/>
            <person name="Nash R.S."/>
            <person name="Weng S."/>
            <person name="Wong E.D."/>
            <person name="Lloyd P."/>
            <person name="Skrzypek M.S."/>
            <person name="Miyasato S.R."/>
            <person name="Simison M."/>
            <person name="Cherry J.M."/>
        </authorList>
    </citation>
    <scope>GENOME REANNOTATION</scope>
    <source>
        <strain>ATCC 204508 / S288c</strain>
    </source>
</reference>
<reference key="3">
    <citation type="journal article" date="2002" name="Nat. Biotechnol.">
        <title>An integrated approach for finding overlooked genes in yeast.</title>
        <authorList>
            <person name="Kumar A."/>
            <person name="Harrison P.M."/>
            <person name="Cheung K.-H."/>
            <person name="Lan N."/>
            <person name="Echols N."/>
            <person name="Bertone P."/>
            <person name="Miller P."/>
            <person name="Gerstein M.B."/>
            <person name="Snyder M."/>
        </authorList>
    </citation>
    <scope>NUCLEOTIDE SEQUENCE [GENOMIC DNA]</scope>
</reference>
<gene>
    <name type="ordered locus">YLR466C-A</name>
</gene>
<proteinExistence type="uncertain"/>
<keyword id="KW-0472">Membrane</keyword>
<keyword id="KW-0812">Transmembrane</keyword>
<keyword id="KW-1133">Transmembrane helix</keyword>
<sequence>MMPAKLQLDVLRTLQSSARHGTQTLKNSNFLERFHKDRIVFCLPFFPALFLVPVQKVLQHLCLRFTQVAPYFIIQLFDLPSRHAENLAPLLASCRIQYTNCFSSSSNGQVPSIISLYLRVDLSPFYAKIFQISYRVPMIWLDVFQVFFVFLVISQHSLHS</sequence>
<evidence type="ECO:0000255" key="1"/>
<evidence type="ECO:0000305" key="2"/>
<evidence type="ECO:0000305" key="3">
    <source>
    </source>
</evidence>
<comment type="subcellular location">
    <subcellularLocation>
        <location evidence="2">Membrane</location>
        <topology evidence="2">Multi-pass membrane protein</topology>
    </subcellularLocation>
</comment>
<comment type="miscellaneous">
    <text evidence="2">Completely overlaps YRF1-4.</text>
</comment>
<comment type="similarity">
    <text evidence="2">Belongs to the UPF0479 family.</text>
</comment>
<comment type="caution">
    <text evidence="3">Product of a dubious gene prediction unlikely to encode a functional protein. Because of that it is not part of the S.cerevisiae S288c complete/reference proteome set.</text>
</comment>
<organism>
    <name type="scientific">Saccharomyces cerevisiae (strain ATCC 204508 / S288c)</name>
    <name type="common">Baker's yeast</name>
    <dbReference type="NCBI Taxonomy" id="559292"/>
    <lineage>
        <taxon>Eukaryota</taxon>
        <taxon>Fungi</taxon>
        <taxon>Dikarya</taxon>
        <taxon>Ascomycota</taxon>
        <taxon>Saccharomycotina</taxon>
        <taxon>Saccharomycetes</taxon>
        <taxon>Saccharomycetales</taxon>
        <taxon>Saccharomycetaceae</taxon>
        <taxon>Saccharomyces</taxon>
    </lineage>
</organism>
<protein>
    <recommendedName>
        <fullName>Putative UPF0479 protein YLR466C-A</fullName>
    </recommendedName>
</protein>
<accession>P0CL38</accession>
<accession>Q8TF92</accession>
<accession>Q8TGK3</accession>